<comment type="function">
    <text>DNA-binding protein that preferentially recognizes a curved DNA sequence. It is probably a functional analog of DnaJ; displays overlapping activities with DnaJ, but functions under different conditions, probably acting as a molecular chaperone in an adaptive response to environmental stresses other than heat shock. Lacks autonomous chaperone activity; binds native substrates and targets them for recognition by DnaK. Its activity is inhibited by the binding of CbpM.</text>
</comment>
<comment type="interaction">
    <interactant intactId="EBI-546131">
        <id>P36659</id>
    </interactant>
    <interactant intactId="EBI-542092">
        <id>P0A6Y8</id>
        <label>dnaK</label>
    </interactant>
    <organismsDiffer>false</organismsDiffer>
    <experiments>5</experiments>
</comment>
<comment type="subcellular location">
    <subcellularLocation>
        <location evidence="1 3">Cytoplasm</location>
        <location evidence="1 3">Nucleoid</location>
    </subcellularLocation>
</comment>
<comment type="induction">
    <text evidence="2">In late stationary phase, by phosphate-starvation conditions.</text>
</comment>
<comment type="miscellaneous">
    <text>It binds to curved DNA in a sequence-nonspecific fashion.</text>
</comment>
<keyword id="KW-0002">3D-structure</keyword>
<keyword id="KW-0143">Chaperone</keyword>
<keyword id="KW-0963">Cytoplasm</keyword>
<keyword id="KW-0903">Direct protein sequencing</keyword>
<keyword id="KW-0238">DNA-binding</keyword>
<keyword id="KW-1185">Reference proteome</keyword>
<evidence type="ECO:0000269" key="1">
    <source>
    </source>
</evidence>
<evidence type="ECO:0000269" key="2">
    <source>
    </source>
</evidence>
<evidence type="ECO:0000269" key="3">
    <source>
    </source>
</evidence>
<evidence type="ECO:0000305" key="4"/>
<evidence type="ECO:0007829" key="5">
    <source>
        <dbReference type="PDB" id="2KQX"/>
    </source>
</evidence>
<evidence type="ECO:0007829" key="6">
    <source>
        <dbReference type="PDB" id="3UCS"/>
    </source>
</evidence>
<dbReference type="EMBL" id="D16500">
    <property type="protein sequence ID" value="BAA03950.1"/>
    <property type="molecule type" value="Genomic_DNA"/>
</dbReference>
<dbReference type="EMBL" id="U00096">
    <property type="protein sequence ID" value="AAC74085.1"/>
    <property type="molecule type" value="Genomic_DNA"/>
</dbReference>
<dbReference type="EMBL" id="AP009048">
    <property type="protein sequence ID" value="BAA36142.1"/>
    <property type="molecule type" value="Genomic_DNA"/>
</dbReference>
<dbReference type="PIR" id="F64841">
    <property type="entry name" value="F64841"/>
</dbReference>
<dbReference type="RefSeq" id="NP_415520.1">
    <property type="nucleotide sequence ID" value="NC_000913.3"/>
</dbReference>
<dbReference type="RefSeq" id="WP_000420621.1">
    <property type="nucleotide sequence ID" value="NZ_SSZK01000002.1"/>
</dbReference>
<dbReference type="PDB" id="2KQX">
    <property type="method" value="NMR"/>
    <property type="chains" value="A=2-72"/>
</dbReference>
<dbReference type="PDB" id="3UCS">
    <property type="method" value="X-ray"/>
    <property type="resolution" value="1.87 A"/>
    <property type="chains" value="C/D=2-73"/>
</dbReference>
<dbReference type="PDBsum" id="2KQX"/>
<dbReference type="PDBsum" id="3UCS"/>
<dbReference type="SMR" id="P36659"/>
<dbReference type="BioGRID" id="4261259">
    <property type="interactions" value="679"/>
</dbReference>
<dbReference type="BioGRID" id="851888">
    <property type="interactions" value="1"/>
</dbReference>
<dbReference type="DIP" id="DIP-9249N"/>
<dbReference type="FunCoup" id="P36659">
    <property type="interactions" value="196"/>
</dbReference>
<dbReference type="IntAct" id="P36659">
    <property type="interactions" value="50"/>
</dbReference>
<dbReference type="STRING" id="511145.b1000"/>
<dbReference type="jPOST" id="P36659"/>
<dbReference type="PaxDb" id="511145-b1000"/>
<dbReference type="EnsemblBacteria" id="AAC74085">
    <property type="protein sequence ID" value="AAC74085"/>
    <property type="gene ID" value="b1000"/>
</dbReference>
<dbReference type="GeneID" id="86863513"/>
<dbReference type="GeneID" id="947572"/>
<dbReference type="KEGG" id="ecj:JW0985"/>
<dbReference type="KEGG" id="eco:b1000"/>
<dbReference type="KEGG" id="ecoc:C3026_06090"/>
<dbReference type="PATRIC" id="fig|1411691.4.peg.1271"/>
<dbReference type="EchoBASE" id="EB2110"/>
<dbReference type="eggNOG" id="COG0484">
    <property type="taxonomic scope" value="Bacteria"/>
</dbReference>
<dbReference type="HOGENOM" id="CLU_017633_0_0_6"/>
<dbReference type="InParanoid" id="P36659"/>
<dbReference type="OMA" id="FAGRDFY"/>
<dbReference type="OrthoDB" id="9779889at2"/>
<dbReference type="PhylomeDB" id="P36659"/>
<dbReference type="BioCyc" id="EcoCyc:EG12193-MONOMER"/>
<dbReference type="EvolutionaryTrace" id="P36659"/>
<dbReference type="PRO" id="PR:P36659"/>
<dbReference type="Proteomes" id="UP000000625">
    <property type="component" value="Chromosome"/>
</dbReference>
<dbReference type="GO" id="GO:0043590">
    <property type="term" value="C:bacterial nucleoid"/>
    <property type="evidence" value="ECO:0000314"/>
    <property type="project" value="EcoCyc"/>
</dbReference>
<dbReference type="GO" id="GO:0005737">
    <property type="term" value="C:cytoplasm"/>
    <property type="evidence" value="ECO:0000318"/>
    <property type="project" value="GO_Central"/>
</dbReference>
<dbReference type="GO" id="GO:0003681">
    <property type="term" value="F:bent DNA binding"/>
    <property type="evidence" value="ECO:0000314"/>
    <property type="project" value="EcoliWiki"/>
</dbReference>
<dbReference type="GO" id="GO:0003677">
    <property type="term" value="F:DNA binding"/>
    <property type="evidence" value="ECO:0000314"/>
    <property type="project" value="EcoCyc"/>
</dbReference>
<dbReference type="GO" id="GO:0042802">
    <property type="term" value="F:identical protein binding"/>
    <property type="evidence" value="ECO:0000314"/>
    <property type="project" value="EcoCyc"/>
</dbReference>
<dbReference type="GO" id="GO:0051082">
    <property type="term" value="F:unfolded protein binding"/>
    <property type="evidence" value="ECO:0000318"/>
    <property type="project" value="GO_Central"/>
</dbReference>
<dbReference type="GO" id="GO:0051085">
    <property type="term" value="P:chaperone cofactor-dependent protein refolding"/>
    <property type="evidence" value="ECO:0000314"/>
    <property type="project" value="EcoCyc"/>
</dbReference>
<dbReference type="GO" id="GO:0042026">
    <property type="term" value="P:protein refolding"/>
    <property type="evidence" value="ECO:0000318"/>
    <property type="project" value="GO_Central"/>
</dbReference>
<dbReference type="CDD" id="cd06257">
    <property type="entry name" value="DnaJ"/>
    <property type="match status" value="1"/>
</dbReference>
<dbReference type="CDD" id="cd10747">
    <property type="entry name" value="DnaJ_C"/>
    <property type="match status" value="1"/>
</dbReference>
<dbReference type="FunFam" id="1.10.287.110:FF:000013">
    <property type="entry name" value="Curved DNA-binding protein"/>
    <property type="match status" value="1"/>
</dbReference>
<dbReference type="FunFam" id="2.60.260.20:FF:000008">
    <property type="entry name" value="Curved DNA-binding protein"/>
    <property type="match status" value="1"/>
</dbReference>
<dbReference type="FunFam" id="2.60.260.20:FF:000010">
    <property type="entry name" value="Curved DNA-binding protein"/>
    <property type="match status" value="1"/>
</dbReference>
<dbReference type="Gene3D" id="1.10.287.110">
    <property type="entry name" value="DnaJ domain"/>
    <property type="match status" value="1"/>
</dbReference>
<dbReference type="Gene3D" id="1.20.5.460">
    <property type="entry name" value="Single helix bin"/>
    <property type="match status" value="1"/>
</dbReference>
<dbReference type="Gene3D" id="2.60.260.20">
    <property type="entry name" value="Urease metallochaperone UreE, N-terminal domain"/>
    <property type="match status" value="2"/>
</dbReference>
<dbReference type="HAMAP" id="MF_01154">
    <property type="entry name" value="CbpA"/>
    <property type="match status" value="1"/>
</dbReference>
<dbReference type="InterPro" id="IPR023859">
    <property type="entry name" value="DNA-bd_curved-DNA"/>
</dbReference>
<dbReference type="InterPro" id="IPR002939">
    <property type="entry name" value="DnaJ_C"/>
</dbReference>
<dbReference type="InterPro" id="IPR001623">
    <property type="entry name" value="DnaJ_domain"/>
</dbReference>
<dbReference type="InterPro" id="IPR018253">
    <property type="entry name" value="DnaJ_domain_CS"/>
</dbReference>
<dbReference type="InterPro" id="IPR008971">
    <property type="entry name" value="HSP40/DnaJ_pept-bd"/>
</dbReference>
<dbReference type="InterPro" id="IPR036869">
    <property type="entry name" value="J_dom_sf"/>
</dbReference>
<dbReference type="NCBIfam" id="NF007618">
    <property type="entry name" value="PRK10266.1"/>
    <property type="match status" value="1"/>
</dbReference>
<dbReference type="PANTHER" id="PTHR43096">
    <property type="entry name" value="DNAJ HOMOLOG 1, MITOCHONDRIAL-RELATED"/>
    <property type="match status" value="1"/>
</dbReference>
<dbReference type="PANTHER" id="PTHR43096:SF52">
    <property type="entry name" value="DNAJ HOMOLOG 1, MITOCHONDRIAL-RELATED"/>
    <property type="match status" value="1"/>
</dbReference>
<dbReference type="Pfam" id="PF00226">
    <property type="entry name" value="DnaJ"/>
    <property type="match status" value="1"/>
</dbReference>
<dbReference type="Pfam" id="PF01556">
    <property type="entry name" value="DnaJ_C"/>
    <property type="match status" value="1"/>
</dbReference>
<dbReference type="PRINTS" id="PR00625">
    <property type="entry name" value="JDOMAIN"/>
</dbReference>
<dbReference type="SMART" id="SM00271">
    <property type="entry name" value="DnaJ"/>
    <property type="match status" value="1"/>
</dbReference>
<dbReference type="SUPFAM" id="SSF46565">
    <property type="entry name" value="Chaperone J-domain"/>
    <property type="match status" value="1"/>
</dbReference>
<dbReference type="SUPFAM" id="SSF49493">
    <property type="entry name" value="HSP40/DnaJ peptide-binding domain"/>
    <property type="match status" value="2"/>
</dbReference>
<dbReference type="PROSITE" id="PS00636">
    <property type="entry name" value="DNAJ_1"/>
    <property type="match status" value="1"/>
</dbReference>
<dbReference type="PROSITE" id="PS50076">
    <property type="entry name" value="DNAJ_2"/>
    <property type="match status" value="1"/>
</dbReference>
<accession>P36659</accession>
<accession>P77250</accession>
<feature type="chain" id="PRO_0000169988" description="Curved DNA-binding protein">
    <location>
        <begin position="1"/>
        <end position="306"/>
    </location>
</feature>
<feature type="domain" description="J">
    <location>
        <begin position="5"/>
        <end position="69"/>
    </location>
</feature>
<feature type="sequence conflict" description="In Ref. 1; BAA03950." evidence="4" ref="1">
    <original>QSSFDPRKDWGKA</original>
    <variation>PVVF</variation>
    <location>
        <begin position="294"/>
        <end position="306"/>
    </location>
</feature>
<feature type="helix" evidence="6">
    <location>
        <begin position="6"/>
        <end position="10"/>
    </location>
</feature>
<feature type="helix" evidence="6">
    <location>
        <begin position="18"/>
        <end position="32"/>
    </location>
</feature>
<feature type="turn" evidence="6">
    <location>
        <begin position="34"/>
        <end position="36"/>
    </location>
</feature>
<feature type="strand" evidence="5">
    <location>
        <begin position="39"/>
        <end position="41"/>
    </location>
</feature>
<feature type="helix" evidence="6">
    <location>
        <begin position="42"/>
        <end position="56"/>
    </location>
</feature>
<feature type="helix" evidence="6">
    <location>
        <begin position="59"/>
        <end position="70"/>
    </location>
</feature>
<protein>
    <recommendedName>
        <fullName>Curved DNA-binding protein</fullName>
    </recommendedName>
</protein>
<organism>
    <name type="scientific">Escherichia coli (strain K12)</name>
    <dbReference type="NCBI Taxonomy" id="83333"/>
    <lineage>
        <taxon>Bacteria</taxon>
        <taxon>Pseudomonadati</taxon>
        <taxon>Pseudomonadota</taxon>
        <taxon>Gammaproteobacteria</taxon>
        <taxon>Enterobacterales</taxon>
        <taxon>Enterobacteriaceae</taxon>
        <taxon>Escherichia</taxon>
    </lineage>
</organism>
<gene>
    <name type="primary">cbpA</name>
    <name type="ordered locus">b1000</name>
    <name type="ordered locus">JW0985</name>
</gene>
<name>CBPA_ECOLI</name>
<sequence length="306" mass="34455">MELKDYYAIMGVKPTDDLKTIKTAYRRLARKYHPDVSKEPDAEARFKEVAEAWEVLSDEQRRAEYDQMWQHRNDPQFNRQFHHGDGQSFNAEDFDDIFSSIFGQHARQSRQRPATRGHDIEIEVAVFLEETLTEHKRTISYNLPVYNAFGMIEQEIPKTLNVKIPAGVGNGQRIRLKGQGTPGENGGPNGDLWLVIHIAPHPLFDIVGQDLEIVVPVSPWEAALGAKVTVPTLKESILLTIPPGSQAGQRLRVKGKGLVSKKQTGDLYAVLKIVMPPKPDENTAALWQQLADAQSSFDPRKDWGKA</sequence>
<reference key="1">
    <citation type="journal article" date="1994" name="Proc. Natl. Acad. Sci. U.S.A.">
        <title>An analogue of the DnaJ molecular chaperone in Escherichia coli.</title>
        <authorList>
            <person name="Ueguchi C."/>
            <person name="Kakeda M."/>
            <person name="Yamada H."/>
            <person name="Mizuno T."/>
        </authorList>
    </citation>
    <scope>NUCLEOTIDE SEQUENCE [GENOMIC DNA]</scope>
    <scope>PROTEIN SEQUENCE OF 1-19</scope>
    <scope>SUBCELLULAR LOCATION</scope>
    <source>
        <strain>K12</strain>
    </source>
</reference>
<reference key="2">
    <citation type="journal article" date="1996" name="DNA Res.">
        <title>A 718-kb DNA sequence of the Escherichia coli K-12 genome corresponding to the 12.7-28.0 min region on the linkage map.</title>
        <authorList>
            <person name="Oshima T."/>
            <person name="Aiba H."/>
            <person name="Baba T."/>
            <person name="Fujita K."/>
            <person name="Hayashi K."/>
            <person name="Honjo A."/>
            <person name="Ikemoto K."/>
            <person name="Inada T."/>
            <person name="Itoh T."/>
            <person name="Kajihara M."/>
            <person name="Kanai K."/>
            <person name="Kashimoto K."/>
            <person name="Kimura S."/>
            <person name="Kitagawa M."/>
            <person name="Makino K."/>
            <person name="Masuda S."/>
            <person name="Miki T."/>
            <person name="Mizobuchi K."/>
            <person name="Mori H."/>
            <person name="Motomura K."/>
            <person name="Nakamura Y."/>
            <person name="Nashimoto H."/>
            <person name="Nishio Y."/>
            <person name="Saito N."/>
            <person name="Sampei G."/>
            <person name="Seki Y."/>
            <person name="Tagami H."/>
            <person name="Takemoto K."/>
            <person name="Wada C."/>
            <person name="Yamamoto Y."/>
            <person name="Yano M."/>
            <person name="Horiuchi T."/>
        </authorList>
    </citation>
    <scope>NUCLEOTIDE SEQUENCE [LARGE SCALE GENOMIC DNA]</scope>
    <source>
        <strain>K12 / W3110 / ATCC 27325 / DSM 5911</strain>
    </source>
</reference>
<reference key="3">
    <citation type="journal article" date="1997" name="Science">
        <title>The complete genome sequence of Escherichia coli K-12.</title>
        <authorList>
            <person name="Blattner F.R."/>
            <person name="Plunkett G. III"/>
            <person name="Bloch C.A."/>
            <person name="Perna N.T."/>
            <person name="Burland V."/>
            <person name="Riley M."/>
            <person name="Collado-Vides J."/>
            <person name="Glasner J.D."/>
            <person name="Rode C.K."/>
            <person name="Mayhew G.F."/>
            <person name="Gregor J."/>
            <person name="Davis N.W."/>
            <person name="Kirkpatrick H.A."/>
            <person name="Goeden M.A."/>
            <person name="Rose D.J."/>
            <person name="Mau B."/>
            <person name="Shao Y."/>
        </authorList>
    </citation>
    <scope>NUCLEOTIDE SEQUENCE [LARGE SCALE GENOMIC DNA]</scope>
    <source>
        <strain>K12 / MG1655 / ATCC 47076</strain>
    </source>
</reference>
<reference key="4">
    <citation type="journal article" date="2006" name="Mol. Syst. Biol.">
        <title>Highly accurate genome sequences of Escherichia coli K-12 strains MG1655 and W3110.</title>
        <authorList>
            <person name="Hayashi K."/>
            <person name="Morooka N."/>
            <person name="Yamamoto Y."/>
            <person name="Fujita K."/>
            <person name="Isono K."/>
            <person name="Choi S."/>
            <person name="Ohtsubo E."/>
            <person name="Baba T."/>
            <person name="Wanner B.L."/>
            <person name="Mori H."/>
            <person name="Horiuchi T."/>
        </authorList>
    </citation>
    <scope>NUCLEOTIDE SEQUENCE [LARGE SCALE GENOMIC DNA]</scope>
    <source>
        <strain>K12 / W3110 / ATCC 27325 / DSM 5911</strain>
    </source>
</reference>
<reference key="5">
    <citation type="journal article" date="1994" name="Mol. Microbiol.">
        <title>An analogue of the DnaJ molecular chaperone whose expression is controlled by sigma S during the stationary phase and phosphate starvation in Escherichia coli.</title>
        <authorList>
            <person name="Yamashino T."/>
            <person name="Kakeda M."/>
            <person name="Ueguchi C."/>
            <person name="Mizuno T."/>
        </authorList>
    </citation>
    <scope>INDUCTION</scope>
</reference>
<reference key="6">
    <citation type="journal article" date="1995" name="J. Bacteriol.">
        <title>A study of the double mutation of dnaJ and cbpA, whose gene products function as molecular chaperones in Escherichia coli.</title>
        <authorList>
            <person name="Ueguchi C."/>
            <person name="Shiozawa T."/>
            <person name="Kakeda M."/>
            <person name="Yamada H."/>
            <person name="Mizuno T."/>
        </authorList>
    </citation>
    <scope>POSSIBLE FUNCTION</scope>
</reference>
<reference key="7">
    <citation type="journal article" date="1996" name="J. Bacteriol.">
        <title>The cbpA chaperone gene function compensates for dnaJ in lambda plasmid replication during amino acid starvation of Escherichia coli.</title>
        <authorList>
            <person name="Wegrzyn A."/>
            <person name="Taylor K."/>
            <person name="Wegrzyn G."/>
        </authorList>
    </citation>
    <scope>POSSIBLE FUNCTION</scope>
</reference>
<reference key="8">
    <citation type="journal article" date="1999" name="J. Biol. Chem.">
        <title>Twelve species of the nucleoid-associated protein from Escherichia coli. Sequence recognition specificity and DNA binding affinity.</title>
        <authorList>
            <person name="Azam T.A."/>
            <person name="Ishihama A."/>
        </authorList>
    </citation>
    <scope>BINDING AFFINITY FOR DNA</scope>
</reference>
<reference key="9">
    <citation type="journal article" date="2000" name="Genes Cells">
        <title>Two types of localization of the DNA-binding proteins within the Escherichia coli nucleoid.</title>
        <authorList>
            <person name="Azam T.A."/>
            <person name="Hiraga S."/>
            <person name="Ishihama A."/>
        </authorList>
    </citation>
    <scope>SUBCELLULAR LOCATION</scope>
</reference>
<reference key="10">
    <citation type="journal article" date="2004" name="J. Biol. Chem.">
        <title>CbpA, a DnaJ homolog, is a DnaK co-chaperone, and its activity is modulated by CbpM.</title>
        <authorList>
            <person name="Chae C."/>
            <person name="Sharma S."/>
            <person name="Hoskins J.R."/>
            <person name="Wickner S."/>
        </authorList>
    </citation>
    <scope>CHARACTERIZATION</scope>
    <source>
        <strain>K12 / DH5-alpha</strain>
    </source>
</reference>
<reference key="11">
    <citation type="journal article" date="2007" name="J. Bacteriol.">
        <title>In vivo modulation of a DnaJ homolog, CbpA, by CbpM.</title>
        <authorList>
            <person name="Chenoweth M.R."/>
            <person name="Trun N."/>
            <person name="Wickner S."/>
        </authorList>
    </citation>
    <scope>REGULATION BY CBPM</scope>
</reference>
<proteinExistence type="evidence at protein level"/>